<evidence type="ECO:0000255" key="1">
    <source>
        <dbReference type="HAMAP-Rule" id="MF_01151"/>
    </source>
</evidence>
<evidence type="ECO:0000256" key="2">
    <source>
        <dbReference type="SAM" id="MobiDB-lite"/>
    </source>
</evidence>
<protein>
    <recommendedName>
        <fullName evidence="1">Protein GrpE</fullName>
    </recommendedName>
    <alternativeName>
        <fullName evidence="1">HSP-70 cofactor</fullName>
    </alternativeName>
</protein>
<proteinExistence type="inferred from homology"/>
<gene>
    <name evidence="1" type="primary">grpE</name>
</gene>
<feature type="chain" id="PRO_0000113740" description="Protein GrpE">
    <location>
        <begin position="1"/>
        <end position="221"/>
    </location>
</feature>
<feature type="region of interest" description="Disordered" evidence="2">
    <location>
        <begin position="1"/>
        <end position="83"/>
    </location>
</feature>
<feature type="compositionally biased region" description="Basic and acidic residues" evidence="2">
    <location>
        <begin position="23"/>
        <end position="32"/>
    </location>
</feature>
<feature type="compositionally biased region" description="Low complexity" evidence="2">
    <location>
        <begin position="41"/>
        <end position="53"/>
    </location>
</feature>
<reference key="1">
    <citation type="journal article" date="1996" name="Gene">
        <title>Cloning and sequencing of the dnaK operon of Bacillus stearothermophilus.</title>
        <authorList>
            <person name="Herbort M."/>
            <person name="Schoen U."/>
            <person name="Lang J."/>
            <person name="Schumann W."/>
        </authorList>
    </citation>
    <scope>NUCLEOTIDE SEQUENCE [GENOMIC DNA]</scope>
    <source>
        <strain>NUB36</strain>
    </source>
</reference>
<organism>
    <name type="scientific">Geobacillus stearothermophilus</name>
    <name type="common">Bacillus stearothermophilus</name>
    <dbReference type="NCBI Taxonomy" id="1422"/>
    <lineage>
        <taxon>Bacteria</taxon>
        <taxon>Bacillati</taxon>
        <taxon>Bacillota</taxon>
        <taxon>Bacilli</taxon>
        <taxon>Bacillales</taxon>
        <taxon>Anoxybacillaceae</taxon>
        <taxon>Geobacillus</taxon>
    </lineage>
</organism>
<keyword id="KW-0143">Chaperone</keyword>
<keyword id="KW-0963">Cytoplasm</keyword>
<keyword id="KW-0346">Stress response</keyword>
<name>GRPE_GEOSE</name>
<dbReference type="EMBL" id="X90709">
    <property type="protein sequence ID" value="CAA62238.1"/>
    <property type="molecule type" value="Genomic_DNA"/>
</dbReference>
<dbReference type="PIR" id="JC4740">
    <property type="entry name" value="JC4740"/>
</dbReference>
<dbReference type="SMR" id="Q59240"/>
<dbReference type="GO" id="GO:0005737">
    <property type="term" value="C:cytoplasm"/>
    <property type="evidence" value="ECO:0007669"/>
    <property type="project" value="UniProtKB-SubCell"/>
</dbReference>
<dbReference type="GO" id="GO:0000774">
    <property type="term" value="F:adenyl-nucleotide exchange factor activity"/>
    <property type="evidence" value="ECO:0007669"/>
    <property type="project" value="InterPro"/>
</dbReference>
<dbReference type="GO" id="GO:0042803">
    <property type="term" value="F:protein homodimerization activity"/>
    <property type="evidence" value="ECO:0007669"/>
    <property type="project" value="InterPro"/>
</dbReference>
<dbReference type="GO" id="GO:0051087">
    <property type="term" value="F:protein-folding chaperone binding"/>
    <property type="evidence" value="ECO:0007669"/>
    <property type="project" value="InterPro"/>
</dbReference>
<dbReference type="GO" id="GO:0051082">
    <property type="term" value="F:unfolded protein binding"/>
    <property type="evidence" value="ECO:0007669"/>
    <property type="project" value="TreeGrafter"/>
</dbReference>
<dbReference type="GO" id="GO:0006457">
    <property type="term" value="P:protein folding"/>
    <property type="evidence" value="ECO:0007669"/>
    <property type="project" value="InterPro"/>
</dbReference>
<dbReference type="CDD" id="cd00446">
    <property type="entry name" value="GrpE"/>
    <property type="match status" value="1"/>
</dbReference>
<dbReference type="FunFam" id="2.30.22.10:FF:000001">
    <property type="entry name" value="Protein GrpE"/>
    <property type="match status" value="1"/>
</dbReference>
<dbReference type="Gene3D" id="3.90.20.20">
    <property type="match status" value="1"/>
</dbReference>
<dbReference type="Gene3D" id="2.30.22.10">
    <property type="entry name" value="Head domain of nucleotide exchange factor GrpE"/>
    <property type="match status" value="1"/>
</dbReference>
<dbReference type="HAMAP" id="MF_01151">
    <property type="entry name" value="GrpE"/>
    <property type="match status" value="1"/>
</dbReference>
<dbReference type="InterPro" id="IPR000740">
    <property type="entry name" value="GrpE"/>
</dbReference>
<dbReference type="InterPro" id="IPR013805">
    <property type="entry name" value="GrpE_coiled_coil"/>
</dbReference>
<dbReference type="InterPro" id="IPR009012">
    <property type="entry name" value="GrpE_head"/>
</dbReference>
<dbReference type="NCBIfam" id="NF010738">
    <property type="entry name" value="PRK14140.1"/>
    <property type="match status" value="1"/>
</dbReference>
<dbReference type="PANTHER" id="PTHR21237">
    <property type="entry name" value="GRPE PROTEIN"/>
    <property type="match status" value="1"/>
</dbReference>
<dbReference type="PANTHER" id="PTHR21237:SF23">
    <property type="entry name" value="GRPE PROTEIN HOMOLOG, MITOCHONDRIAL"/>
    <property type="match status" value="1"/>
</dbReference>
<dbReference type="Pfam" id="PF01025">
    <property type="entry name" value="GrpE"/>
    <property type="match status" value="1"/>
</dbReference>
<dbReference type="PRINTS" id="PR00773">
    <property type="entry name" value="GRPEPROTEIN"/>
</dbReference>
<dbReference type="SUPFAM" id="SSF58014">
    <property type="entry name" value="Coiled-coil domain of nucleotide exchange factor GrpE"/>
    <property type="match status" value="1"/>
</dbReference>
<dbReference type="SUPFAM" id="SSF51064">
    <property type="entry name" value="Head domain of nucleotide exchange factor GrpE"/>
    <property type="match status" value="1"/>
</dbReference>
<dbReference type="PROSITE" id="PS01071">
    <property type="entry name" value="GRPE"/>
    <property type="match status" value="1"/>
</dbReference>
<sequence length="221" mass="25608">MEQEQKATQEQATYEEWTAPEPQEEKAEERGGNEPQEENAENLQQENTQAQQEALEEQPKAEQEQNDELAAANAKNCRTRSEDKRNGNRYLRLYADFENFRRRTRQEMEAAEKYRAQSLVSDLLPALDNFERALKIETENEQAKSILQGMEMVYRSVLDALKKEGVEAIEAVGKPFDPHLHQAVMQVEDSNYEPNTVVEEFQKGYKLKDRVIRPAMVKVSQ</sequence>
<accession>Q59240</accession>
<comment type="function">
    <text evidence="1">Participates actively in the response to hyperosmotic and heat shock by preventing the aggregation of stress-denatured proteins, in association with DnaK and GrpE. It is the nucleotide exchange factor for DnaK and may function as a thermosensor. Unfolded proteins bind initially to DnaJ; upon interaction with the DnaJ-bound protein, DnaK hydrolyzes its bound ATP, resulting in the formation of a stable complex. GrpE releases ADP from DnaK; ATP binding to DnaK triggers the release of the substrate protein, thus completing the reaction cycle. Several rounds of ATP-dependent interactions between DnaJ, DnaK and GrpE are required for fully efficient folding.</text>
</comment>
<comment type="subunit">
    <text evidence="1">Homodimer.</text>
</comment>
<comment type="subcellular location">
    <subcellularLocation>
        <location evidence="1">Cytoplasm</location>
    </subcellularLocation>
</comment>
<comment type="similarity">
    <text evidence="1">Belongs to the GrpE family.</text>
</comment>